<accession>P68194</accession>
<accession>P10884</accession>
<keyword id="KW-0903">Direct protein sequencing</keyword>
<keyword id="KW-0349">Heme</keyword>
<keyword id="KW-0408">Iron</keyword>
<keyword id="KW-0479">Metal-binding</keyword>
<keyword id="KW-0488">Methylation</keyword>
<keyword id="KW-0561">Oxygen transport</keyword>
<keyword id="KW-0597">Phosphoprotein</keyword>
<keyword id="KW-0813">Transport</keyword>
<proteinExistence type="evidence at protein level"/>
<evidence type="ECO:0000250" key="1">
    <source>
        <dbReference type="UniProtKB" id="P02089"/>
    </source>
</evidence>
<evidence type="ECO:0000250" key="2">
    <source>
        <dbReference type="UniProtKB" id="P02091"/>
    </source>
</evidence>
<evidence type="ECO:0000255" key="3">
    <source>
        <dbReference type="PROSITE-ProRule" id="PRU00238"/>
    </source>
</evidence>
<organism>
    <name type="scientific">Panthera tigris sumatrae</name>
    <name type="common">Sumatran tiger</name>
    <name type="synonym">Panthera sumatrae</name>
    <dbReference type="NCBI Taxonomy" id="9695"/>
    <lineage>
        <taxon>Eukaryota</taxon>
        <taxon>Metazoa</taxon>
        <taxon>Chordata</taxon>
        <taxon>Craniata</taxon>
        <taxon>Vertebrata</taxon>
        <taxon>Euteleostomi</taxon>
        <taxon>Mammalia</taxon>
        <taxon>Eutheria</taxon>
        <taxon>Laurasiatheria</taxon>
        <taxon>Carnivora</taxon>
        <taxon>Feliformia</taxon>
        <taxon>Felidae</taxon>
        <taxon>Pantherinae</taxon>
        <taxon>Panthera</taxon>
    </lineage>
</organism>
<name>HBB2_PANTS</name>
<comment type="function">
    <text>Involved in oxygen transport from the lung to the various peripheral tissues.</text>
</comment>
<comment type="subunit">
    <text>Heterotetramer of two alpha chains and two beta chains.</text>
</comment>
<comment type="tissue specificity">
    <text>Red blood cells.</text>
</comment>
<comment type="miscellaneous">
    <text>In the cat family (felidae), the oxygen affinity of hemoglobin depends little or not at all on the association with diphosphoglycerate (DPG).</text>
</comment>
<comment type="similarity">
    <text evidence="3">Belongs to the globin family.</text>
</comment>
<reference key="1">
    <citation type="journal article" date="1989" name="Biol. Chem. Hoppe-Seyler">
        <title>Carnivora: the amino-acid sequence of the adult Sumatran tiger (Panthera tigris sumatrae) hemoglobins.</title>
        <authorList>
            <person name="Jahan M.J."/>
            <person name="Ahmed A."/>
            <person name="Braunitzer G."/>
            <person name="Goltenboth R."/>
        </authorList>
    </citation>
    <scope>PROTEIN SEQUENCE</scope>
</reference>
<gene>
    <name type="primary">HBB2</name>
</gene>
<protein>
    <recommendedName>
        <fullName>Hemoglobin subunit beta-2</fullName>
    </recommendedName>
    <alternativeName>
        <fullName>Beta-2-globin</fullName>
    </alternativeName>
    <alternativeName>
        <fullName>Hemoglobin beta-2 chain</fullName>
    </alternativeName>
</protein>
<feature type="chain" id="PRO_0000053062" description="Hemoglobin subunit beta-2">
    <location>
        <begin position="1"/>
        <end position="146"/>
    </location>
</feature>
<feature type="domain" description="Globin" evidence="3">
    <location>
        <begin position="2"/>
        <end position="146"/>
    </location>
</feature>
<feature type="binding site" description="distal binding residue">
    <location>
        <position position="63"/>
    </location>
    <ligand>
        <name>heme b</name>
        <dbReference type="ChEBI" id="CHEBI:60344"/>
    </ligand>
    <ligandPart>
        <name>Fe</name>
        <dbReference type="ChEBI" id="CHEBI:18248"/>
    </ligandPart>
</feature>
<feature type="binding site" description="proximal binding residue">
    <location>
        <position position="92"/>
    </location>
    <ligand>
        <name>heme b</name>
        <dbReference type="ChEBI" id="CHEBI:60344"/>
    </ligand>
    <ligandPart>
        <name>Fe</name>
        <dbReference type="ChEBI" id="CHEBI:18248"/>
    </ligandPart>
</feature>
<feature type="modified residue" description="N6-succinyllysine" evidence="1">
    <location>
        <position position="17"/>
    </location>
</feature>
<feature type="modified residue" description="Phosphoserine" evidence="1">
    <location>
        <position position="44"/>
    </location>
</feature>
<feature type="modified residue" description="Phosphoserine" evidence="2">
    <location>
        <position position="50"/>
    </location>
</feature>
<feature type="modified residue" description="N6-succinyllysine" evidence="1">
    <location>
        <position position="59"/>
    </location>
</feature>
<feature type="modified residue" description="Asymmetric dimethylarginine" evidence="1">
    <location>
        <position position="104"/>
    </location>
</feature>
<sequence>GFLSAEEKGLVNGLWSKVNVDEVGGEALGRLLVVYPWTQRFFQSFGDLSSADAIMSNAKVKAHGKKVLNSFSDGLKNIDDLKGAFAKLSELHCDKLHVDPENFRLLGNVLVCVLAHHFGHEFNPQVQAAFQKVVAGVASALAHRYH</sequence>
<dbReference type="PIR" id="S11301">
    <property type="entry name" value="HBTX2"/>
</dbReference>
<dbReference type="SMR" id="P68194"/>
<dbReference type="GO" id="GO:0072562">
    <property type="term" value="C:blood microparticle"/>
    <property type="evidence" value="ECO:0007669"/>
    <property type="project" value="TreeGrafter"/>
</dbReference>
<dbReference type="GO" id="GO:0031838">
    <property type="term" value="C:haptoglobin-hemoglobin complex"/>
    <property type="evidence" value="ECO:0007669"/>
    <property type="project" value="TreeGrafter"/>
</dbReference>
<dbReference type="GO" id="GO:0005833">
    <property type="term" value="C:hemoglobin complex"/>
    <property type="evidence" value="ECO:0007669"/>
    <property type="project" value="InterPro"/>
</dbReference>
<dbReference type="GO" id="GO:0031720">
    <property type="term" value="F:haptoglobin binding"/>
    <property type="evidence" value="ECO:0007669"/>
    <property type="project" value="TreeGrafter"/>
</dbReference>
<dbReference type="GO" id="GO:0020037">
    <property type="term" value="F:heme binding"/>
    <property type="evidence" value="ECO:0007669"/>
    <property type="project" value="InterPro"/>
</dbReference>
<dbReference type="GO" id="GO:0031721">
    <property type="term" value="F:hemoglobin alpha binding"/>
    <property type="evidence" value="ECO:0007669"/>
    <property type="project" value="TreeGrafter"/>
</dbReference>
<dbReference type="GO" id="GO:0046872">
    <property type="term" value="F:metal ion binding"/>
    <property type="evidence" value="ECO:0007669"/>
    <property type="project" value="UniProtKB-KW"/>
</dbReference>
<dbReference type="GO" id="GO:0043177">
    <property type="term" value="F:organic acid binding"/>
    <property type="evidence" value="ECO:0007669"/>
    <property type="project" value="TreeGrafter"/>
</dbReference>
<dbReference type="GO" id="GO:0019825">
    <property type="term" value="F:oxygen binding"/>
    <property type="evidence" value="ECO:0007669"/>
    <property type="project" value="InterPro"/>
</dbReference>
<dbReference type="GO" id="GO:0005344">
    <property type="term" value="F:oxygen carrier activity"/>
    <property type="evidence" value="ECO:0007669"/>
    <property type="project" value="UniProtKB-KW"/>
</dbReference>
<dbReference type="GO" id="GO:0004601">
    <property type="term" value="F:peroxidase activity"/>
    <property type="evidence" value="ECO:0007669"/>
    <property type="project" value="TreeGrafter"/>
</dbReference>
<dbReference type="GO" id="GO:0042744">
    <property type="term" value="P:hydrogen peroxide catabolic process"/>
    <property type="evidence" value="ECO:0007669"/>
    <property type="project" value="TreeGrafter"/>
</dbReference>
<dbReference type="CDD" id="cd08925">
    <property type="entry name" value="Hb-beta-like"/>
    <property type="match status" value="1"/>
</dbReference>
<dbReference type="FunFam" id="1.10.490.10:FF:000001">
    <property type="entry name" value="Hemoglobin subunit beta"/>
    <property type="match status" value="1"/>
</dbReference>
<dbReference type="Gene3D" id="1.10.490.10">
    <property type="entry name" value="Globins"/>
    <property type="match status" value="1"/>
</dbReference>
<dbReference type="InterPro" id="IPR000971">
    <property type="entry name" value="Globin"/>
</dbReference>
<dbReference type="InterPro" id="IPR009050">
    <property type="entry name" value="Globin-like_sf"/>
</dbReference>
<dbReference type="InterPro" id="IPR012292">
    <property type="entry name" value="Globin/Proto"/>
</dbReference>
<dbReference type="InterPro" id="IPR002337">
    <property type="entry name" value="Hemoglobin_b"/>
</dbReference>
<dbReference type="InterPro" id="IPR050056">
    <property type="entry name" value="Hemoglobin_oxygen_transport"/>
</dbReference>
<dbReference type="PANTHER" id="PTHR11442">
    <property type="entry name" value="HEMOGLOBIN FAMILY MEMBER"/>
    <property type="match status" value="1"/>
</dbReference>
<dbReference type="PANTHER" id="PTHR11442:SF42">
    <property type="entry name" value="HEMOGLOBIN SUBUNIT BETA"/>
    <property type="match status" value="1"/>
</dbReference>
<dbReference type="Pfam" id="PF00042">
    <property type="entry name" value="Globin"/>
    <property type="match status" value="1"/>
</dbReference>
<dbReference type="PRINTS" id="PR00814">
    <property type="entry name" value="BETAHAEM"/>
</dbReference>
<dbReference type="SUPFAM" id="SSF46458">
    <property type="entry name" value="Globin-like"/>
    <property type="match status" value="1"/>
</dbReference>
<dbReference type="PROSITE" id="PS01033">
    <property type="entry name" value="GLOBIN"/>
    <property type="match status" value="1"/>
</dbReference>